<organism>
    <name type="scientific">Escherichia coli (strain K12)</name>
    <dbReference type="NCBI Taxonomy" id="83333"/>
    <lineage>
        <taxon>Bacteria</taxon>
        <taxon>Pseudomonadati</taxon>
        <taxon>Pseudomonadota</taxon>
        <taxon>Gammaproteobacteria</taxon>
        <taxon>Enterobacterales</taxon>
        <taxon>Enterobacteriaceae</taxon>
        <taxon>Escherichia</taxon>
    </lineage>
</organism>
<evidence type="ECO:0000255" key="1"/>
<evidence type="ECO:0000305" key="2"/>
<protein>
    <recommendedName>
        <fullName>Maltose operon periplasmic protein</fullName>
    </recommendedName>
</protein>
<comment type="function">
    <text>Not yet known. Might function in the uptake of a still unidentified substrate.</text>
</comment>
<comment type="subcellular location">
    <subcellularLocation>
        <location>Periplasm</location>
    </subcellularLocation>
</comment>
<comment type="similarity">
    <text evidence="2">To S.typhimurium MalM.</text>
</comment>
<feature type="signal peptide" description="Or 26" evidence="1">
    <location>
        <begin position="1"/>
        <end position="22"/>
    </location>
</feature>
<feature type="chain" id="PRO_0000021634" description="Maltose operon periplasmic protein">
    <location>
        <begin position="23"/>
        <end position="306"/>
    </location>
</feature>
<gene>
    <name type="primary">malM</name>
    <name type="synonym">molA</name>
    <name type="ordered locus">b4037</name>
    <name type="ordered locus">JW3997</name>
</gene>
<sequence>MKMNKSLIVLCLSAGLLASAPGISLADVNYVPQNTSDAPAIPSAALQQLTWTPVDQSKTQTTQLATGGQQLNVPGISGPVAAYSVPANIGELTLTLTSEVNKQTSVFAPNVLILDQNMTPSAFFPSSYFTYQEPGVMSADRLEGVMRLTPALGQQKLYVLVFTTEKDLQQTTQLLDPAKAYAKGVGNSIPDIPDPVARHTTDGLLKLKVKTNSSSSVLVGPLFGSSAPAPVTVGNTAAPAVAAPAPAPVKKSEPMLNDTESYFNTAIKNAVAKGDVDKALKLLDEAERLGSTSARSTFISSVKGKG</sequence>
<keyword id="KW-0574">Periplasm</keyword>
<keyword id="KW-1185">Reference proteome</keyword>
<keyword id="KW-0732">Signal</keyword>
<keyword id="KW-0762">Sugar transport</keyword>
<keyword id="KW-0813">Transport</keyword>
<dbReference type="EMBL" id="J01648">
    <property type="protein sequence ID" value="AAB59059.1"/>
    <property type="molecule type" value="Genomic_DNA"/>
</dbReference>
<dbReference type="EMBL" id="X04477">
    <property type="protein sequence ID" value="CAA28166.1"/>
    <property type="molecule type" value="Genomic_DNA"/>
</dbReference>
<dbReference type="EMBL" id="U00006">
    <property type="protein sequence ID" value="AAC43131.1"/>
    <property type="molecule type" value="Genomic_DNA"/>
</dbReference>
<dbReference type="EMBL" id="U00096">
    <property type="protein sequence ID" value="AAC77007.1"/>
    <property type="molecule type" value="Genomic_DNA"/>
</dbReference>
<dbReference type="EMBL" id="AP009048">
    <property type="protein sequence ID" value="BAE78039.1"/>
    <property type="molecule type" value="Genomic_DNA"/>
</dbReference>
<dbReference type="EMBL" id="V00298">
    <property type="protein sequence ID" value="CAA23576.1"/>
    <property type="molecule type" value="Genomic_DNA"/>
</dbReference>
<dbReference type="EMBL" id="M26131">
    <property type="protein sequence ID" value="AAA24061.1"/>
    <property type="molecule type" value="Genomic_DNA"/>
</dbReference>
<dbReference type="PIR" id="A25787">
    <property type="entry name" value="BVECMM"/>
</dbReference>
<dbReference type="RefSeq" id="NP_418461.1">
    <property type="nucleotide sequence ID" value="NC_000913.3"/>
</dbReference>
<dbReference type="RefSeq" id="WP_001326641.1">
    <property type="nucleotide sequence ID" value="NZ_SSZK01000016.1"/>
</dbReference>
<dbReference type="SMR" id="P03841"/>
<dbReference type="BioGRID" id="4262664">
    <property type="interactions" value="13"/>
</dbReference>
<dbReference type="DIP" id="DIP-10145N"/>
<dbReference type="FunCoup" id="P03841">
    <property type="interactions" value="58"/>
</dbReference>
<dbReference type="STRING" id="511145.b4037"/>
<dbReference type="jPOST" id="P03841"/>
<dbReference type="PaxDb" id="511145-b4037"/>
<dbReference type="EnsemblBacteria" id="AAC77007">
    <property type="protein sequence ID" value="AAC77007"/>
    <property type="gene ID" value="b4037"/>
</dbReference>
<dbReference type="GeneID" id="948547"/>
<dbReference type="KEGG" id="ecj:JW3997"/>
<dbReference type="KEGG" id="eco:b4037"/>
<dbReference type="KEGG" id="ecoc:C3026_21815"/>
<dbReference type="PATRIC" id="fig|511145.12.peg.4152"/>
<dbReference type="EchoBASE" id="EB0554"/>
<dbReference type="eggNOG" id="ENOG502Z7PA">
    <property type="taxonomic scope" value="Bacteria"/>
</dbReference>
<dbReference type="HOGENOM" id="CLU_078779_1_0_6"/>
<dbReference type="InParanoid" id="P03841"/>
<dbReference type="OMA" id="PDPIAKH"/>
<dbReference type="OrthoDB" id="5944162at2"/>
<dbReference type="PhylomeDB" id="P03841"/>
<dbReference type="BioCyc" id="EcoCyc:EG10559-MONOMER"/>
<dbReference type="PRO" id="PR:P03841"/>
<dbReference type="Proteomes" id="UP000000625">
    <property type="component" value="Chromosome"/>
</dbReference>
<dbReference type="GO" id="GO:0030288">
    <property type="term" value="C:outer membrane-bounded periplasmic space"/>
    <property type="evidence" value="ECO:0000314"/>
    <property type="project" value="EcoCyc"/>
</dbReference>
<dbReference type="GO" id="GO:0008643">
    <property type="term" value="P:carbohydrate transport"/>
    <property type="evidence" value="ECO:0007669"/>
    <property type="project" value="InterPro"/>
</dbReference>
<dbReference type="InterPro" id="IPR010794">
    <property type="entry name" value="MalM"/>
</dbReference>
<dbReference type="NCBIfam" id="NF007855">
    <property type="entry name" value="PRK10564.1"/>
    <property type="match status" value="1"/>
</dbReference>
<dbReference type="Pfam" id="PF07148">
    <property type="entry name" value="MalM"/>
    <property type="match status" value="1"/>
</dbReference>
<proteinExistence type="inferred from homology"/>
<accession>P03841</accession>
<accession>Q2M6R7</accession>
<name>MALM_ECOLI</name>
<reference key="1">
    <citation type="journal article" date="1986" name="J. Mol. Biol.">
        <title>malM, a new gene of the maltose regulon in Escherichia coli K12. I. malM is the last gene of the malK-lamB operon and encodes a periplasmic protein.</title>
        <authorList>
            <person name="Gilson E."/>
            <person name="Rousset J.-P."/>
            <person name="Charbit A."/>
            <person name="Perrin D."/>
            <person name="Hofnung M."/>
        </authorList>
    </citation>
    <scope>NUCLEOTIDE SEQUENCE [GENOMIC DNA]</scope>
    <source>
        <strain>K12</strain>
    </source>
</reference>
<reference key="2">
    <citation type="journal article" date="1993" name="Nucleic Acids Res.">
        <title>Analysis of the Escherichia coli genome. IV. DNA sequence of the region from 89.2 to 92.8 minutes.</title>
        <authorList>
            <person name="Blattner F.R."/>
            <person name="Burland V.D."/>
            <person name="Plunkett G. III"/>
            <person name="Sofia H.J."/>
            <person name="Daniels D.L."/>
        </authorList>
    </citation>
    <scope>NUCLEOTIDE SEQUENCE [LARGE SCALE GENOMIC DNA]</scope>
    <source>
        <strain>K12 / MG1655 / ATCC 47076</strain>
    </source>
</reference>
<reference key="3">
    <citation type="journal article" date="1997" name="Science">
        <title>The complete genome sequence of Escherichia coli K-12.</title>
        <authorList>
            <person name="Blattner F.R."/>
            <person name="Plunkett G. III"/>
            <person name="Bloch C.A."/>
            <person name="Perna N.T."/>
            <person name="Burland V."/>
            <person name="Riley M."/>
            <person name="Collado-Vides J."/>
            <person name="Glasner J.D."/>
            <person name="Rode C.K."/>
            <person name="Mayhew G.F."/>
            <person name="Gregor J."/>
            <person name="Davis N.W."/>
            <person name="Kirkpatrick H.A."/>
            <person name="Goeden M.A."/>
            <person name="Rose D.J."/>
            <person name="Mau B."/>
            <person name="Shao Y."/>
        </authorList>
    </citation>
    <scope>NUCLEOTIDE SEQUENCE [LARGE SCALE GENOMIC DNA]</scope>
    <source>
        <strain>K12 / MG1655 / ATCC 47076</strain>
    </source>
</reference>
<reference key="4">
    <citation type="journal article" date="2006" name="Mol. Syst. Biol.">
        <title>Highly accurate genome sequences of Escherichia coli K-12 strains MG1655 and W3110.</title>
        <authorList>
            <person name="Hayashi K."/>
            <person name="Morooka N."/>
            <person name="Yamamoto Y."/>
            <person name="Fujita K."/>
            <person name="Isono K."/>
            <person name="Choi S."/>
            <person name="Ohtsubo E."/>
            <person name="Baba T."/>
            <person name="Wanner B.L."/>
            <person name="Mori H."/>
            <person name="Horiuchi T."/>
        </authorList>
    </citation>
    <scope>NUCLEOTIDE SEQUENCE [LARGE SCALE GENOMIC DNA]</scope>
    <source>
        <strain>K12 / W3110 / ATCC 27325 / DSM 5911</strain>
    </source>
</reference>
<reference key="5">
    <citation type="journal article" date="1981" name="Cell">
        <title>Gene sequence of the lambda receptor, an outer membrane protein of E. coli K12.</title>
        <authorList>
            <person name="Clement J.M."/>
            <person name="Hofnung M."/>
        </authorList>
    </citation>
    <scope>NUCLEOTIDE SEQUENCE [GENOMIC DNA] OF 1-131</scope>
    <source>
        <strain>K12</strain>
    </source>
</reference>